<dbReference type="EMBL" id="AY735442">
    <property type="protein sequence ID" value="AAU08017.1"/>
    <property type="molecule type" value="mRNA"/>
</dbReference>
<dbReference type="EMBL" id="AY735443">
    <property type="protein sequence ID" value="AAU08018.1"/>
    <property type="molecule type" value="mRNA"/>
</dbReference>
<dbReference type="EMBL" id="AAAB01008859">
    <property type="protein sequence ID" value="EDO64233.1"/>
    <property type="status" value="ALT_SEQ"/>
    <property type="molecule type" value="Genomic_DNA"/>
</dbReference>
<dbReference type="EMBL" id="AAAB01008900">
    <property type="status" value="NOT_ANNOTATED_CDS"/>
    <property type="molecule type" value="Genomic_DNA"/>
</dbReference>
<dbReference type="RefSeq" id="XP_001688381.1">
    <property type="nucleotide sequence ID" value="XM_001688329.1"/>
</dbReference>
<dbReference type="SMR" id="Q66Q82"/>
<dbReference type="FunCoup" id="Q66Q82">
    <property type="interactions" value="3"/>
</dbReference>
<dbReference type="STRING" id="7165.Q66Q82"/>
<dbReference type="PaxDb" id="7165-AGAP002537-PA"/>
<dbReference type="VEuPathDB" id="VectorBase:AGAMI1_003272"/>
<dbReference type="VEuPathDB" id="VectorBase:AGAP002537"/>
<dbReference type="eggNOG" id="KOG1216">
    <property type="taxonomic scope" value="Eukaryota"/>
</dbReference>
<dbReference type="HOGENOM" id="CLU_2339394_0_0_1"/>
<dbReference type="InParanoid" id="Q66Q82"/>
<dbReference type="Proteomes" id="UP000007062">
    <property type="component" value="Chromosome 2L"/>
</dbReference>
<dbReference type="Proteomes" id="UP000007062">
    <property type="component" value="Chromosome 2R"/>
</dbReference>
<dbReference type="GO" id="GO:0005615">
    <property type="term" value="C:extracellular space"/>
    <property type="evidence" value="ECO:0000318"/>
    <property type="project" value="GO_Central"/>
</dbReference>
<dbReference type="GO" id="GO:0005179">
    <property type="term" value="F:hormone activity"/>
    <property type="evidence" value="ECO:0007669"/>
    <property type="project" value="UniProtKB-KW"/>
</dbReference>
<dbReference type="GO" id="GO:0048018">
    <property type="term" value="F:receptor ligand activity"/>
    <property type="evidence" value="ECO:0000318"/>
    <property type="project" value="GO_Central"/>
</dbReference>
<dbReference type="FunFam" id="2.10.90.10:FF:000054">
    <property type="entry name" value="Bursicon"/>
    <property type="match status" value="1"/>
</dbReference>
<dbReference type="Gene3D" id="2.10.90.10">
    <property type="entry name" value="Cystine-knot cytokines"/>
    <property type="match status" value="1"/>
</dbReference>
<dbReference type="InterPro" id="IPR006207">
    <property type="entry name" value="Cys_knot_C"/>
</dbReference>
<dbReference type="InterPro" id="IPR029034">
    <property type="entry name" value="Cystine-knot_cytokine"/>
</dbReference>
<dbReference type="InterPro" id="IPR004133">
    <property type="entry name" value="DAN"/>
</dbReference>
<dbReference type="PANTHER" id="PTHR15283:SF7">
    <property type="entry name" value="BURSICON"/>
    <property type="match status" value="1"/>
</dbReference>
<dbReference type="PANTHER" id="PTHR15283">
    <property type="entry name" value="GREMLIN 1"/>
    <property type="match status" value="1"/>
</dbReference>
<dbReference type="Pfam" id="PF03045">
    <property type="entry name" value="DAN"/>
    <property type="match status" value="1"/>
</dbReference>
<dbReference type="PROSITE" id="PS01225">
    <property type="entry name" value="CTCK_2"/>
    <property type="match status" value="1"/>
</dbReference>
<evidence type="ECO:0000250" key="1"/>
<evidence type="ECO:0000250" key="2">
    <source>
        <dbReference type="UniProtKB" id="P04275"/>
    </source>
</evidence>
<evidence type="ECO:0000250" key="3">
    <source>
        <dbReference type="UniProtKB" id="Q9VD83"/>
    </source>
</evidence>
<evidence type="ECO:0000255" key="4"/>
<evidence type="ECO:0000255" key="5">
    <source>
        <dbReference type="PROSITE-ProRule" id="PRU00039"/>
    </source>
</evidence>
<evidence type="ECO:0000305" key="6"/>
<gene>
    <name type="primary">burs124</name>
</gene>
<gene>
    <name type="primary">burs3</name>
    <name type="ORF">AGAP002537</name>
</gene>
<comment type="function">
    <text evidence="3">Final heterodimeric neurohormone released at the end of the molting cycle, involved in the sclerotization (tanning) of the insect cuticle, melanization and wing spreading.</text>
</comment>
<comment type="subunit">
    <text evidence="1">Heterodimer of burs and pburs.</text>
</comment>
<comment type="subcellular location">
    <subcellularLocation>
        <location evidence="1">Secreted</location>
    </subcellularLocation>
</comment>
<comment type="miscellaneous">
    <text>The bursicon gene is encoded by two loci: burs124 on chromosome arm 2L contains exons 1, 2 and 4, and burs3 on arm 2R contains exon 3. Exon 3 is trans-spliced into position in the mature transcript. This unusual gene arrangement has existed for at least the 150 million years (MY) of mosquito evolution since the split of the culicid and anophelid family lineages, but is younger than the 250 MY split of the dipteran suborders Nematocera and Brachycera (containing the Culicidea and Drosophilidae, respectively).</text>
</comment>
<comment type="sequence caution" evidence="6">
    <conflict type="erroneous gene model prediction">
        <sequence resource="EMBL-CDS" id="EDO64233"/>
    </conflict>
    <text>AAAB01008859 carries exon 3.</text>
</comment>
<sequence>MKSTFLVVLELAFFLLPGRVLYAQKDSEDGGSHYSSDDCQVTPVIHVLQYPGCVPKPIPSFACIGRCASYIQVSGSKIWQMERSCMCCQESGEREASVSLFCPKAKNGEKKFRKVSTKAPLECMCRPCTGIEDANVIPQELTSFADEGTLTGYFQKSHYKSIE</sequence>
<reference key="1">
    <citation type="journal article" date="2007" name="Genetics">
        <title>The bursicon gene in mosquitoes: an unusual example of mRNA trans-splicing.</title>
        <authorList>
            <person name="Robertson H.M."/>
            <person name="Navik J.A."/>
            <person name="Walden K.K.O."/>
            <person name="Honegger H.-W."/>
        </authorList>
    </citation>
    <scope>NUCLEOTIDE SEQUENCE [MRNA]</scope>
    <scope>TRANS-SPLICING</scope>
</reference>
<reference key="2">
    <citation type="journal article" date="2002" name="Science">
        <title>The genome sequence of the malaria mosquito Anopheles gambiae.</title>
        <authorList>
            <person name="Holt R.A."/>
            <person name="Subramanian G.M."/>
            <person name="Halpern A."/>
            <person name="Sutton G.G."/>
            <person name="Charlab R."/>
            <person name="Nusskern D.R."/>
            <person name="Wincker P."/>
            <person name="Clark A.G."/>
            <person name="Ribeiro J.M.C."/>
            <person name="Wides R."/>
            <person name="Salzberg S.L."/>
            <person name="Loftus B.J."/>
            <person name="Yandell M.D."/>
            <person name="Majoros W.H."/>
            <person name="Rusch D.B."/>
            <person name="Lai Z."/>
            <person name="Kraft C.L."/>
            <person name="Abril J.F."/>
            <person name="Anthouard V."/>
            <person name="Arensburger P."/>
            <person name="Atkinson P.W."/>
            <person name="Baden H."/>
            <person name="de Berardinis V."/>
            <person name="Baldwin D."/>
            <person name="Benes V."/>
            <person name="Biedler J."/>
            <person name="Blass C."/>
            <person name="Bolanos R."/>
            <person name="Boscus D."/>
            <person name="Barnstead M."/>
            <person name="Cai S."/>
            <person name="Center A."/>
            <person name="Chaturverdi K."/>
            <person name="Christophides G.K."/>
            <person name="Chrystal M.A.M."/>
            <person name="Clamp M."/>
            <person name="Cravchik A."/>
            <person name="Curwen V."/>
            <person name="Dana A."/>
            <person name="Delcher A."/>
            <person name="Dew I."/>
            <person name="Evans C.A."/>
            <person name="Flanigan M."/>
            <person name="Grundschober-Freimoser A."/>
            <person name="Friedli L."/>
            <person name="Gu Z."/>
            <person name="Guan P."/>
            <person name="Guigo R."/>
            <person name="Hillenmeyer M.E."/>
            <person name="Hladun S.L."/>
            <person name="Hogan J.R."/>
            <person name="Hong Y.S."/>
            <person name="Hoover J."/>
            <person name="Jaillon O."/>
            <person name="Ke Z."/>
            <person name="Kodira C.D."/>
            <person name="Kokoza E."/>
            <person name="Koutsos A."/>
            <person name="Letunic I."/>
            <person name="Levitsky A.A."/>
            <person name="Liang Y."/>
            <person name="Lin J.-J."/>
            <person name="Lobo N.F."/>
            <person name="Lopez J.R."/>
            <person name="Malek J.A."/>
            <person name="McIntosh T.C."/>
            <person name="Meister S."/>
            <person name="Miller J.R."/>
            <person name="Mobarry C."/>
            <person name="Mongin E."/>
            <person name="Murphy S.D."/>
            <person name="O'Brochta D.A."/>
            <person name="Pfannkoch C."/>
            <person name="Qi R."/>
            <person name="Regier M.A."/>
            <person name="Remington K."/>
            <person name="Shao H."/>
            <person name="Sharakhova M.V."/>
            <person name="Sitter C.D."/>
            <person name="Shetty J."/>
            <person name="Smith T.J."/>
            <person name="Strong R."/>
            <person name="Sun J."/>
            <person name="Thomasova D."/>
            <person name="Ton L.Q."/>
            <person name="Topalis P."/>
            <person name="Tu Z.J."/>
            <person name="Unger M.F."/>
            <person name="Walenz B."/>
            <person name="Wang A.H."/>
            <person name="Wang J."/>
            <person name="Wang M."/>
            <person name="Wang X."/>
            <person name="Woodford K.J."/>
            <person name="Wortman J.R."/>
            <person name="Wu M."/>
            <person name="Yao A."/>
            <person name="Zdobnov E.M."/>
            <person name="Zhang H."/>
            <person name="Zhao Q."/>
            <person name="Zhao S."/>
            <person name="Zhu S.C."/>
            <person name="Zhimulev I."/>
            <person name="Coluzzi M."/>
            <person name="della Torre A."/>
            <person name="Roth C.W."/>
            <person name="Louis C."/>
            <person name="Kalush F."/>
            <person name="Mural R.J."/>
            <person name="Myers E.W."/>
            <person name="Adams M.D."/>
            <person name="Smith H.O."/>
            <person name="Broder S."/>
            <person name="Gardner M.J."/>
            <person name="Fraser C.M."/>
            <person name="Birney E."/>
            <person name="Bork P."/>
            <person name="Brey P.T."/>
            <person name="Venter J.C."/>
            <person name="Weissenbach J."/>
            <person name="Kafatos F.C."/>
            <person name="Collins F.H."/>
            <person name="Hoffman S.L."/>
        </authorList>
    </citation>
    <scope>NUCLEOTIDE SEQUENCE [LARGE SCALE GENOMIC DNA]</scope>
    <source>
        <strain>PEST</strain>
    </source>
</reference>
<proteinExistence type="evidence at transcript level"/>
<keyword id="KW-1015">Disulfide bond</keyword>
<keyword id="KW-0372">Hormone</keyword>
<keyword id="KW-1185">Reference proteome</keyword>
<keyword id="KW-0964">Secreted</keyword>
<keyword id="KW-0732">Signal</keyword>
<protein>
    <recommendedName>
        <fullName>Bursicon</fullName>
    </recommendedName>
    <alternativeName>
        <fullName>Bursicon subunit alpha</fullName>
    </alternativeName>
    <alternativeName>
        <fullName>Cuticle-tanning hormone</fullName>
    </alternativeName>
</protein>
<feature type="signal peptide" evidence="4">
    <location>
        <begin position="1"/>
        <end position="23"/>
    </location>
</feature>
<feature type="chain" id="PRO_0000223886" description="Bursicon">
    <location>
        <begin position="24"/>
        <end position="163"/>
    </location>
</feature>
<feature type="domain" description="CTCK" evidence="5">
    <location>
        <begin position="39"/>
        <end position="129"/>
    </location>
</feature>
<feature type="disulfide bond" evidence="2 5">
    <location>
        <begin position="39"/>
        <end position="88"/>
    </location>
</feature>
<feature type="disulfide bond" evidence="2 5">
    <location>
        <begin position="53"/>
        <end position="102"/>
    </location>
</feature>
<feature type="disulfide bond" evidence="2 5">
    <location>
        <begin position="63"/>
        <end position="123"/>
    </location>
</feature>
<feature type="disulfide bond" evidence="2 5">
    <location>
        <begin position="67"/>
        <end position="125"/>
    </location>
</feature>
<feature type="disulfide bond" evidence="2 5">
    <location>
        <begin position="85"/>
        <end position="128"/>
    </location>
</feature>
<feature type="disulfide bond" description="Interchain" evidence="2 5">
    <location>
        <position position="87"/>
    </location>
</feature>
<name>BURS_ANOGA</name>
<accession>Q66Q82</accession>
<accession>A7USU8</accession>
<organism>
    <name type="scientific">Anopheles gambiae</name>
    <name type="common">African malaria mosquito</name>
    <dbReference type="NCBI Taxonomy" id="7165"/>
    <lineage>
        <taxon>Eukaryota</taxon>
        <taxon>Metazoa</taxon>
        <taxon>Ecdysozoa</taxon>
        <taxon>Arthropoda</taxon>
        <taxon>Hexapoda</taxon>
        <taxon>Insecta</taxon>
        <taxon>Pterygota</taxon>
        <taxon>Neoptera</taxon>
        <taxon>Endopterygota</taxon>
        <taxon>Diptera</taxon>
        <taxon>Nematocera</taxon>
        <taxon>Culicoidea</taxon>
        <taxon>Culicidae</taxon>
        <taxon>Anophelinae</taxon>
        <taxon>Anopheles</taxon>
    </lineage>
</organism>